<keyword id="KW-0963">Cytoplasm</keyword>
<keyword id="KW-0274">FAD</keyword>
<keyword id="KW-0285">Flavoprotein</keyword>
<keyword id="KW-0489">Methyltransferase</keyword>
<keyword id="KW-0511">Multifunctional enzyme</keyword>
<keyword id="KW-0560">Oxidoreductase</keyword>
<keyword id="KW-0949">S-adenosyl-L-methionine</keyword>
<keyword id="KW-0808">Transferase</keyword>
<keyword id="KW-0819">tRNA processing</keyword>
<organism>
    <name type="scientific">Shigella boydii serotype 4 (strain Sb227)</name>
    <dbReference type="NCBI Taxonomy" id="300268"/>
    <lineage>
        <taxon>Bacteria</taxon>
        <taxon>Pseudomonadati</taxon>
        <taxon>Pseudomonadota</taxon>
        <taxon>Gammaproteobacteria</taxon>
        <taxon>Enterobacterales</taxon>
        <taxon>Enterobacteriaceae</taxon>
        <taxon>Shigella</taxon>
    </lineage>
</organism>
<name>MNMC_SHIBS</name>
<reference key="1">
    <citation type="journal article" date="2005" name="Nucleic Acids Res.">
        <title>Genome dynamics and diversity of Shigella species, the etiologic agents of bacillary dysentery.</title>
        <authorList>
            <person name="Yang F."/>
            <person name="Yang J."/>
            <person name="Zhang X."/>
            <person name="Chen L."/>
            <person name="Jiang Y."/>
            <person name="Yan Y."/>
            <person name="Tang X."/>
            <person name="Wang J."/>
            <person name="Xiong Z."/>
            <person name="Dong J."/>
            <person name="Xue Y."/>
            <person name="Zhu Y."/>
            <person name="Xu X."/>
            <person name="Sun L."/>
            <person name="Chen S."/>
            <person name="Nie H."/>
            <person name="Peng J."/>
            <person name="Xu J."/>
            <person name="Wang Y."/>
            <person name="Yuan Z."/>
            <person name="Wen Y."/>
            <person name="Yao Z."/>
            <person name="Shen Y."/>
            <person name="Qiang B."/>
            <person name="Hou Y."/>
            <person name="Yu J."/>
            <person name="Jin Q."/>
        </authorList>
    </citation>
    <scope>NUCLEOTIDE SEQUENCE [LARGE SCALE GENOMIC DNA]</scope>
    <source>
        <strain>Sb227</strain>
    </source>
</reference>
<gene>
    <name evidence="1" type="primary">mnmC</name>
    <name type="ordered locus">SBO_2361</name>
</gene>
<sequence>MKHYSIQPANLEFNAEGTPVSRDFDDVYFSNDNGLEETRYVFLGGNQLEVRFPEHPHPLFVVAESGFGTGLNFLTLWQAFDQFREAHPQAQLQRLHFISFEKFPLTRADLALAHQHWPELAPWAEQLQAQWPMPLPGCHRLLLDEGRVTLDLWFGDINELTSQQDDSLNQKVDAWFLDGFAPAKNPDMWTQNLFNAMARLARPGGTLATFTSAGFVRRGLQDAGFTMQKRKGFGRKREMLCGVMEQTLPLPCSAPWFNRTGSSKREAAIIGGGIACALLSLALLRRGWQVTLYCADEAPALGASGNRQGALYPLLSKHDEALNRFFSNAFTFARRFYDQLPVKFDHDWCGVTQLGWDEKSQHKIAQMLSMDLPAELAVAVEANAVEQITGVATNCSGITYPQGGWLCPAELTRNVLELAQQQGLQIYYQYQLQNLSRKDDCWLLNFAGDQQATHSVVVLANGHQISRFSQTSTLPVYSVAGQVSHIPTTPELAELKQVLCYDGYLTPQNPANQHHCIGASYHRGSEDTAYSEDDQQQNRQRLIDCFPQAQWAKEVDVSDKEARCGVRCATRDHLPMVGNVPDYEATLVEYASLAEQKDEAVSAPVFDDLFMFAALGSRGLCSAPLCAEILAAQMSDEPIPMDASTLAALNPNRLWVRKLLKGKAVKAG</sequence>
<comment type="function">
    <text evidence="1">Catalyzes the last two steps in the biosynthesis of 5-methylaminomethyl-2-thiouridine (mnm(5)s(2)U) at the wobble position (U34) in tRNA. Catalyzes the FAD-dependent demodification of cmnm(5)s(2)U34 to nm(5)s(2)U34, followed by the transfer of a methyl group from S-adenosyl-L-methionine to nm(5)s(2)U34, to form mnm(5)s(2)U34.</text>
</comment>
<comment type="catalytic activity">
    <reaction evidence="1">
        <text>5-aminomethyl-2-thiouridine(34) in tRNA + S-adenosyl-L-methionine = 5-methylaminomethyl-2-thiouridine(34) in tRNA + S-adenosyl-L-homocysteine + H(+)</text>
        <dbReference type="Rhea" id="RHEA:19569"/>
        <dbReference type="Rhea" id="RHEA-COMP:10195"/>
        <dbReference type="Rhea" id="RHEA-COMP:10197"/>
        <dbReference type="ChEBI" id="CHEBI:15378"/>
        <dbReference type="ChEBI" id="CHEBI:57856"/>
        <dbReference type="ChEBI" id="CHEBI:59789"/>
        <dbReference type="ChEBI" id="CHEBI:74454"/>
        <dbReference type="ChEBI" id="CHEBI:74455"/>
        <dbReference type="EC" id="2.1.1.61"/>
    </reaction>
</comment>
<comment type="cofactor">
    <cofactor evidence="1">
        <name>FAD</name>
        <dbReference type="ChEBI" id="CHEBI:57692"/>
    </cofactor>
</comment>
<comment type="subcellular location">
    <subcellularLocation>
        <location evidence="1">Cytoplasm</location>
    </subcellularLocation>
</comment>
<comment type="similarity">
    <text evidence="1">In the N-terminal section; belongs to the methyltransferase superfamily. tRNA (mnm(5)s(2)U34)-methyltransferase family.</text>
</comment>
<comment type="similarity">
    <text evidence="1">In the C-terminal section; belongs to the DAO family.</text>
</comment>
<comment type="sequence caution" evidence="2">
    <conflict type="erroneous initiation">
        <sequence resource="EMBL-CDS" id="ABB66924"/>
    </conflict>
</comment>
<evidence type="ECO:0000255" key="1">
    <source>
        <dbReference type="HAMAP-Rule" id="MF_01102"/>
    </source>
</evidence>
<evidence type="ECO:0000305" key="2"/>
<protein>
    <recommendedName>
        <fullName evidence="1">tRNA 5-methylaminomethyl-2-thiouridine biosynthesis bifunctional protein MnmC</fullName>
        <shortName evidence="1">tRNA mnm(5)s(2)U biosynthesis bifunctional protein</shortName>
    </recommendedName>
    <domain>
        <recommendedName>
            <fullName evidence="1">tRNA (mnm(5)s(2)U34)-methyltransferase</fullName>
            <ecNumber evidence="1">2.1.1.61</ecNumber>
        </recommendedName>
    </domain>
    <domain>
        <recommendedName>
            <fullName evidence="1">FAD-dependent cmnm(5)s(2)U34 oxidoreductase</fullName>
            <ecNumber evidence="1">1.5.-.-</ecNumber>
        </recommendedName>
    </domain>
</protein>
<proteinExistence type="inferred from homology"/>
<accession>Q31YD4</accession>
<dbReference type="EC" id="2.1.1.61" evidence="1"/>
<dbReference type="EC" id="1.5.-.-" evidence="1"/>
<dbReference type="EMBL" id="CP000036">
    <property type="protein sequence ID" value="ABB66924.1"/>
    <property type="status" value="ALT_INIT"/>
    <property type="molecule type" value="Genomic_DNA"/>
</dbReference>
<dbReference type="RefSeq" id="WP_000683818.1">
    <property type="nucleotide sequence ID" value="NC_007613.1"/>
</dbReference>
<dbReference type="SMR" id="Q31YD4"/>
<dbReference type="KEGG" id="sbo:SBO_2361"/>
<dbReference type="HOGENOM" id="CLU_022427_1_0_6"/>
<dbReference type="Proteomes" id="UP000007067">
    <property type="component" value="Chromosome"/>
</dbReference>
<dbReference type="GO" id="GO:0005737">
    <property type="term" value="C:cytoplasm"/>
    <property type="evidence" value="ECO:0007669"/>
    <property type="project" value="UniProtKB-SubCell"/>
</dbReference>
<dbReference type="GO" id="GO:0050660">
    <property type="term" value="F:flavin adenine dinucleotide binding"/>
    <property type="evidence" value="ECO:0007669"/>
    <property type="project" value="UniProtKB-UniRule"/>
</dbReference>
<dbReference type="GO" id="GO:0016645">
    <property type="term" value="F:oxidoreductase activity, acting on the CH-NH group of donors"/>
    <property type="evidence" value="ECO:0007669"/>
    <property type="project" value="InterPro"/>
</dbReference>
<dbReference type="GO" id="GO:0004808">
    <property type="term" value="F:tRNA (5-methylaminomethyl-2-thiouridylate)(34)-methyltransferase activity"/>
    <property type="evidence" value="ECO:0007669"/>
    <property type="project" value="UniProtKB-EC"/>
</dbReference>
<dbReference type="GO" id="GO:0032259">
    <property type="term" value="P:methylation"/>
    <property type="evidence" value="ECO:0007669"/>
    <property type="project" value="UniProtKB-KW"/>
</dbReference>
<dbReference type="GO" id="GO:0002098">
    <property type="term" value="P:tRNA wobble uridine modification"/>
    <property type="evidence" value="ECO:0007669"/>
    <property type="project" value="TreeGrafter"/>
</dbReference>
<dbReference type="FunFam" id="3.40.50.150:FF:000107">
    <property type="entry name" value="tRNA 5-methylaminomethyl-2-thiouridine biosynthesis bifunctional protein MnmC"/>
    <property type="match status" value="1"/>
</dbReference>
<dbReference type="Gene3D" id="3.30.9.10">
    <property type="entry name" value="D-Amino Acid Oxidase, subunit A, domain 2"/>
    <property type="match status" value="1"/>
</dbReference>
<dbReference type="Gene3D" id="3.50.50.60">
    <property type="entry name" value="FAD/NAD(P)-binding domain"/>
    <property type="match status" value="1"/>
</dbReference>
<dbReference type="Gene3D" id="3.40.50.150">
    <property type="entry name" value="Vaccinia Virus protein VP39"/>
    <property type="match status" value="1"/>
</dbReference>
<dbReference type="HAMAP" id="MF_01102">
    <property type="entry name" value="MnmC"/>
    <property type="match status" value="1"/>
</dbReference>
<dbReference type="InterPro" id="IPR006076">
    <property type="entry name" value="FAD-dep_OxRdtase"/>
</dbReference>
<dbReference type="InterPro" id="IPR036188">
    <property type="entry name" value="FAD/NAD-bd_sf"/>
</dbReference>
<dbReference type="InterPro" id="IPR008471">
    <property type="entry name" value="MnmC-like_methylTransf"/>
</dbReference>
<dbReference type="InterPro" id="IPR029063">
    <property type="entry name" value="SAM-dependent_MTases_sf"/>
</dbReference>
<dbReference type="InterPro" id="IPR023032">
    <property type="entry name" value="tRNA_MAMT_biosynth_bifunc_MnmC"/>
</dbReference>
<dbReference type="InterPro" id="IPR047785">
    <property type="entry name" value="tRNA_MNMC2"/>
</dbReference>
<dbReference type="InterPro" id="IPR017610">
    <property type="entry name" value="tRNA_S-uridine_synth_MnmC_C"/>
</dbReference>
<dbReference type="NCBIfam" id="TIGR03197">
    <property type="entry name" value="MnmC_Cterm"/>
    <property type="match status" value="1"/>
</dbReference>
<dbReference type="NCBIfam" id="NF002480">
    <property type="entry name" value="PRK01747.1-1"/>
    <property type="match status" value="1"/>
</dbReference>
<dbReference type="NCBIfam" id="NF002481">
    <property type="entry name" value="PRK01747.1-2"/>
    <property type="match status" value="1"/>
</dbReference>
<dbReference type="NCBIfam" id="NF002482">
    <property type="entry name" value="PRK01747.1-3"/>
    <property type="match status" value="1"/>
</dbReference>
<dbReference type="NCBIfam" id="NF002484">
    <property type="entry name" value="PRK01747.1-5"/>
    <property type="match status" value="1"/>
</dbReference>
<dbReference type="NCBIfam" id="NF033855">
    <property type="entry name" value="tRNA_MNMC2"/>
    <property type="match status" value="1"/>
</dbReference>
<dbReference type="PANTHER" id="PTHR13847">
    <property type="entry name" value="SARCOSINE DEHYDROGENASE-RELATED"/>
    <property type="match status" value="1"/>
</dbReference>
<dbReference type="PANTHER" id="PTHR13847:SF283">
    <property type="entry name" value="TRNA 5-METHYLAMINOMETHYL-2-THIOURIDINE BIOSYNTHESIS BIFUNCTIONAL PROTEIN MNMC"/>
    <property type="match status" value="1"/>
</dbReference>
<dbReference type="Pfam" id="PF01266">
    <property type="entry name" value="DAO"/>
    <property type="match status" value="1"/>
</dbReference>
<dbReference type="Pfam" id="PF05430">
    <property type="entry name" value="Methyltransf_30"/>
    <property type="match status" value="1"/>
</dbReference>
<dbReference type="SUPFAM" id="SSF51905">
    <property type="entry name" value="FAD/NAD(P)-binding domain"/>
    <property type="match status" value="1"/>
</dbReference>
<feature type="chain" id="PRO_0000348040" description="tRNA 5-methylaminomethyl-2-thiouridine biosynthesis bifunctional protein MnmC">
    <location>
        <begin position="1"/>
        <end position="668"/>
    </location>
</feature>
<feature type="region of interest" description="tRNA (mnm(5)s(2)U34)-methyltransferase">
    <location>
        <begin position="1"/>
        <end position="245"/>
    </location>
</feature>
<feature type="region of interest" description="FAD-dependent cmnm(5)s(2)U34 oxidoreductase">
    <location>
        <begin position="270"/>
        <end position="668"/>
    </location>
</feature>